<dbReference type="EC" id="6.1.1.21" evidence="1"/>
<dbReference type="EMBL" id="AM743169">
    <property type="protein sequence ID" value="CAQ45659.1"/>
    <property type="molecule type" value="Genomic_DNA"/>
</dbReference>
<dbReference type="RefSeq" id="WP_012480028.1">
    <property type="nucleotide sequence ID" value="NC_010943.1"/>
</dbReference>
<dbReference type="SMR" id="B2FPL6"/>
<dbReference type="EnsemblBacteria" id="CAQ45659">
    <property type="protein sequence ID" value="CAQ45659"/>
    <property type="gene ID" value="Smlt2160"/>
</dbReference>
<dbReference type="KEGG" id="sml:Smlt2160"/>
<dbReference type="PATRIC" id="fig|522373.3.peg.2053"/>
<dbReference type="eggNOG" id="COG0124">
    <property type="taxonomic scope" value="Bacteria"/>
</dbReference>
<dbReference type="HOGENOM" id="CLU_025113_3_0_6"/>
<dbReference type="Proteomes" id="UP000008840">
    <property type="component" value="Chromosome"/>
</dbReference>
<dbReference type="GO" id="GO:0005737">
    <property type="term" value="C:cytoplasm"/>
    <property type="evidence" value="ECO:0007669"/>
    <property type="project" value="UniProtKB-SubCell"/>
</dbReference>
<dbReference type="GO" id="GO:0005524">
    <property type="term" value="F:ATP binding"/>
    <property type="evidence" value="ECO:0007669"/>
    <property type="project" value="UniProtKB-UniRule"/>
</dbReference>
<dbReference type="GO" id="GO:0004821">
    <property type="term" value="F:histidine-tRNA ligase activity"/>
    <property type="evidence" value="ECO:0007669"/>
    <property type="project" value="UniProtKB-UniRule"/>
</dbReference>
<dbReference type="GO" id="GO:0006427">
    <property type="term" value="P:histidyl-tRNA aminoacylation"/>
    <property type="evidence" value="ECO:0007669"/>
    <property type="project" value="UniProtKB-UniRule"/>
</dbReference>
<dbReference type="CDD" id="cd00773">
    <property type="entry name" value="HisRS-like_core"/>
    <property type="match status" value="1"/>
</dbReference>
<dbReference type="CDD" id="cd00859">
    <property type="entry name" value="HisRS_anticodon"/>
    <property type="match status" value="1"/>
</dbReference>
<dbReference type="FunFam" id="3.40.50.800:FF:000027">
    <property type="entry name" value="Histidine--tRNA ligase"/>
    <property type="match status" value="1"/>
</dbReference>
<dbReference type="Gene3D" id="3.40.50.800">
    <property type="entry name" value="Anticodon-binding domain"/>
    <property type="match status" value="1"/>
</dbReference>
<dbReference type="Gene3D" id="3.30.930.10">
    <property type="entry name" value="Bira Bifunctional Protein, Domain 2"/>
    <property type="match status" value="1"/>
</dbReference>
<dbReference type="HAMAP" id="MF_00127">
    <property type="entry name" value="His_tRNA_synth"/>
    <property type="match status" value="1"/>
</dbReference>
<dbReference type="InterPro" id="IPR006195">
    <property type="entry name" value="aa-tRNA-synth_II"/>
</dbReference>
<dbReference type="InterPro" id="IPR045864">
    <property type="entry name" value="aa-tRNA-synth_II/BPL/LPL"/>
</dbReference>
<dbReference type="InterPro" id="IPR004154">
    <property type="entry name" value="Anticodon-bd"/>
</dbReference>
<dbReference type="InterPro" id="IPR036621">
    <property type="entry name" value="Anticodon-bd_dom_sf"/>
</dbReference>
<dbReference type="InterPro" id="IPR015807">
    <property type="entry name" value="His-tRNA-ligase"/>
</dbReference>
<dbReference type="InterPro" id="IPR041715">
    <property type="entry name" value="HisRS-like_core"/>
</dbReference>
<dbReference type="InterPro" id="IPR004516">
    <property type="entry name" value="HisRS/HisZ"/>
</dbReference>
<dbReference type="InterPro" id="IPR033656">
    <property type="entry name" value="HisRS_anticodon"/>
</dbReference>
<dbReference type="NCBIfam" id="TIGR00442">
    <property type="entry name" value="hisS"/>
    <property type="match status" value="1"/>
</dbReference>
<dbReference type="PANTHER" id="PTHR11476:SF7">
    <property type="entry name" value="HISTIDINE--TRNA LIGASE"/>
    <property type="match status" value="1"/>
</dbReference>
<dbReference type="PANTHER" id="PTHR11476">
    <property type="entry name" value="HISTIDYL-TRNA SYNTHETASE"/>
    <property type="match status" value="1"/>
</dbReference>
<dbReference type="Pfam" id="PF03129">
    <property type="entry name" value="HGTP_anticodon"/>
    <property type="match status" value="1"/>
</dbReference>
<dbReference type="Pfam" id="PF13393">
    <property type="entry name" value="tRNA-synt_His"/>
    <property type="match status" value="1"/>
</dbReference>
<dbReference type="PIRSF" id="PIRSF001549">
    <property type="entry name" value="His-tRNA_synth"/>
    <property type="match status" value="1"/>
</dbReference>
<dbReference type="SUPFAM" id="SSF52954">
    <property type="entry name" value="Class II aaRS ABD-related"/>
    <property type="match status" value="1"/>
</dbReference>
<dbReference type="SUPFAM" id="SSF55681">
    <property type="entry name" value="Class II aaRS and biotin synthetases"/>
    <property type="match status" value="1"/>
</dbReference>
<dbReference type="PROSITE" id="PS50862">
    <property type="entry name" value="AA_TRNA_LIGASE_II"/>
    <property type="match status" value="1"/>
</dbReference>
<feature type="chain" id="PRO_1000095598" description="Histidine--tRNA ligase">
    <location>
        <begin position="1"/>
        <end position="464"/>
    </location>
</feature>
<keyword id="KW-0030">Aminoacyl-tRNA synthetase</keyword>
<keyword id="KW-0067">ATP-binding</keyword>
<keyword id="KW-0963">Cytoplasm</keyword>
<keyword id="KW-0436">Ligase</keyword>
<keyword id="KW-0547">Nucleotide-binding</keyword>
<keyword id="KW-0648">Protein biosynthesis</keyword>
<keyword id="KW-1185">Reference proteome</keyword>
<gene>
    <name evidence="1" type="primary">hisS</name>
    <name type="ordered locus">Smlt2160</name>
</gene>
<sequence length="464" mass="51790">MIKPRTPPGTLELLPREQIAFQRMLDVIRRNYERFGFLPVETPVFELSDVLLTKSGGETERQVYFVQSTGALANAAESGDRSLPEMALRFDLTVPLARYVAEHEHELTFPFRRYQMQRVYRGERAQRGRFREFYQCDIDVIGKDSLSVRYDAEVLAVIHAVFSELRIGDFSIQLNNRKLMRGFFESLGVAEGERQLAVLREVDKLDKRGADYVRETLVGEGFEIPAEQVEKILAFVAVRSQGHADALAQLATLEADAGSSEILRTGVAELREVLQLVQALGVPETAYCLNFSIARGLDYYTGTVYETTLTDHPQIGSICSGGRYEDLASHYSKSKLPGVGISIGLSRLFWQLREAGLIDGIEGSSVQALVALMDEQGMPQSLDIARRLRAGGINTEVQMEPKKIGKQFQYAAKAGIRFVVLAGEDELARGVVAVKDLLREQQFEVSRDGLASTLQVELEQSKVM</sequence>
<name>SYH_STRMK</name>
<comment type="catalytic activity">
    <reaction evidence="1">
        <text>tRNA(His) + L-histidine + ATP = L-histidyl-tRNA(His) + AMP + diphosphate + H(+)</text>
        <dbReference type="Rhea" id="RHEA:17313"/>
        <dbReference type="Rhea" id="RHEA-COMP:9665"/>
        <dbReference type="Rhea" id="RHEA-COMP:9689"/>
        <dbReference type="ChEBI" id="CHEBI:15378"/>
        <dbReference type="ChEBI" id="CHEBI:30616"/>
        <dbReference type="ChEBI" id="CHEBI:33019"/>
        <dbReference type="ChEBI" id="CHEBI:57595"/>
        <dbReference type="ChEBI" id="CHEBI:78442"/>
        <dbReference type="ChEBI" id="CHEBI:78527"/>
        <dbReference type="ChEBI" id="CHEBI:456215"/>
        <dbReference type="EC" id="6.1.1.21"/>
    </reaction>
</comment>
<comment type="subunit">
    <text evidence="1">Homodimer.</text>
</comment>
<comment type="subcellular location">
    <subcellularLocation>
        <location evidence="1">Cytoplasm</location>
    </subcellularLocation>
</comment>
<comment type="similarity">
    <text evidence="1">Belongs to the class-II aminoacyl-tRNA synthetase family.</text>
</comment>
<reference key="1">
    <citation type="journal article" date="2008" name="Genome Biol.">
        <title>The complete genome, comparative and functional analysis of Stenotrophomonas maltophilia reveals an organism heavily shielded by drug resistance determinants.</title>
        <authorList>
            <person name="Crossman L.C."/>
            <person name="Gould V.C."/>
            <person name="Dow J.M."/>
            <person name="Vernikos G.S."/>
            <person name="Okazaki A."/>
            <person name="Sebaihia M."/>
            <person name="Saunders D."/>
            <person name="Arrowsmith C."/>
            <person name="Carver T."/>
            <person name="Peters N."/>
            <person name="Adlem E."/>
            <person name="Kerhornou A."/>
            <person name="Lord A."/>
            <person name="Murphy L."/>
            <person name="Seeger K."/>
            <person name="Squares R."/>
            <person name="Rutter S."/>
            <person name="Quail M.A."/>
            <person name="Rajandream M.A."/>
            <person name="Harris D."/>
            <person name="Churcher C."/>
            <person name="Bentley S.D."/>
            <person name="Parkhill J."/>
            <person name="Thomson N.R."/>
            <person name="Avison M.B."/>
        </authorList>
    </citation>
    <scope>NUCLEOTIDE SEQUENCE [LARGE SCALE GENOMIC DNA]</scope>
    <source>
        <strain>K279a</strain>
    </source>
</reference>
<organism>
    <name type="scientific">Stenotrophomonas maltophilia (strain K279a)</name>
    <dbReference type="NCBI Taxonomy" id="522373"/>
    <lineage>
        <taxon>Bacteria</taxon>
        <taxon>Pseudomonadati</taxon>
        <taxon>Pseudomonadota</taxon>
        <taxon>Gammaproteobacteria</taxon>
        <taxon>Lysobacterales</taxon>
        <taxon>Lysobacteraceae</taxon>
        <taxon>Stenotrophomonas</taxon>
        <taxon>Stenotrophomonas maltophilia group</taxon>
    </lineage>
</organism>
<evidence type="ECO:0000255" key="1">
    <source>
        <dbReference type="HAMAP-Rule" id="MF_00127"/>
    </source>
</evidence>
<proteinExistence type="inferred from homology"/>
<accession>B2FPL6</accession>
<protein>
    <recommendedName>
        <fullName evidence="1">Histidine--tRNA ligase</fullName>
        <ecNumber evidence="1">6.1.1.21</ecNumber>
    </recommendedName>
    <alternativeName>
        <fullName evidence="1">Histidyl-tRNA synthetase</fullName>
        <shortName evidence="1">HisRS</shortName>
    </alternativeName>
</protein>